<keyword id="KW-0066">ATP synthesis</keyword>
<keyword id="KW-0138">CF(0)</keyword>
<keyword id="KW-0150">Chloroplast</keyword>
<keyword id="KW-0375">Hydrogen ion transport</keyword>
<keyword id="KW-0406">Ion transport</keyword>
<keyword id="KW-0472">Membrane</keyword>
<keyword id="KW-0934">Plastid</keyword>
<keyword id="KW-0793">Thylakoid</keyword>
<keyword id="KW-0812">Transmembrane</keyword>
<keyword id="KW-1133">Transmembrane helix</keyword>
<keyword id="KW-0813">Transport</keyword>
<accession>B0Z549</accession>
<gene>
    <name evidence="1" type="primary">atpF</name>
</gene>
<sequence>MKNVTDSFVSLVHWPSAGSFGFNTDILATNPINLSVVLGVLIFFGKGVLSDLLDNRKQRILNTIRNSEELREGAIEQLEKARARLQDVQIEAEGYRAYGYFGIDEQRHESINSTYKTLEQLENNKNESIHFEQQRAINQVRQQIFQQALQGALGTLNSCLNNELHLRTISANIGLFGSMKELTD</sequence>
<evidence type="ECO:0000255" key="1">
    <source>
        <dbReference type="HAMAP-Rule" id="MF_01398"/>
    </source>
</evidence>
<organism>
    <name type="scientific">Oenothera glazioviana</name>
    <name type="common">Large-flowered evening primrose</name>
    <name type="synonym">Oenothera erythrosepala</name>
    <dbReference type="NCBI Taxonomy" id="482428"/>
    <lineage>
        <taxon>Eukaryota</taxon>
        <taxon>Viridiplantae</taxon>
        <taxon>Streptophyta</taxon>
        <taxon>Embryophyta</taxon>
        <taxon>Tracheophyta</taxon>
        <taxon>Spermatophyta</taxon>
        <taxon>Magnoliopsida</taxon>
        <taxon>eudicotyledons</taxon>
        <taxon>Gunneridae</taxon>
        <taxon>Pentapetalae</taxon>
        <taxon>rosids</taxon>
        <taxon>malvids</taxon>
        <taxon>Myrtales</taxon>
        <taxon>Onagraceae</taxon>
        <taxon>Onagroideae</taxon>
        <taxon>Onagreae</taxon>
        <taxon>Oenothera</taxon>
    </lineage>
</organism>
<proteinExistence type="inferred from homology"/>
<feature type="chain" id="PRO_0000368961" description="ATP synthase subunit b, chloroplastic">
    <location>
        <begin position="1"/>
        <end position="184"/>
    </location>
</feature>
<feature type="transmembrane region" description="Helical" evidence="1">
    <location>
        <begin position="27"/>
        <end position="49"/>
    </location>
</feature>
<comment type="function">
    <text evidence="1">F(1)F(0) ATP synthase produces ATP from ADP in the presence of a proton or sodium gradient. F-type ATPases consist of two structural domains, F(1) containing the extramembraneous catalytic core and F(0) containing the membrane proton channel, linked together by a central stalk and a peripheral stalk. During catalysis, ATP synthesis in the catalytic domain of F(1) is coupled via a rotary mechanism of the central stalk subunits to proton translocation.</text>
</comment>
<comment type="function">
    <text evidence="1">Component of the F(0) channel, it forms part of the peripheral stalk, linking F(1) to F(0).</text>
</comment>
<comment type="subunit">
    <text evidence="1">F-type ATPases have 2 components, F(1) - the catalytic core - and F(0) - the membrane proton channel. F(1) has five subunits: alpha(3), beta(3), gamma(1), delta(1), epsilon(1). F(0) has four main subunits: a(1), b(1), b'(1) and c(10-14). The alpha and beta chains form an alternating ring which encloses part of the gamma chain. F(1) is attached to F(0) by a central stalk formed by the gamma and epsilon chains, while a peripheral stalk is formed by the delta, b and b' chains.</text>
</comment>
<comment type="subcellular location">
    <subcellularLocation>
        <location evidence="1">Plastid</location>
        <location evidence="1">Chloroplast thylakoid membrane</location>
        <topology evidence="1">Single-pass membrane protein</topology>
    </subcellularLocation>
</comment>
<comment type="miscellaneous">
    <text>In plastids the F-type ATPase is also known as CF(1)CF(0).</text>
</comment>
<comment type="similarity">
    <text evidence="1">Belongs to the ATPase B chain family.</text>
</comment>
<geneLocation type="chloroplast"/>
<reference key="1">
    <citation type="journal article" date="2008" name="Nucleic Acids Res.">
        <title>The complete nucleotide sequences of the five genetically distinct plastid genomes of Oenothera, subsection Oenothera: I. Sequence evaluation and plastome evolution.</title>
        <authorList>
            <person name="Greiner S."/>
            <person name="Wang X."/>
            <person name="Rauwolf U."/>
            <person name="Silber M.V."/>
            <person name="Mayer K."/>
            <person name="Meurer J."/>
            <person name="Haberer G."/>
            <person name="Herrmann R.G."/>
        </authorList>
    </citation>
    <scope>NUCLEOTIDE SEQUENCE [LARGE SCALE GENOMIC DNA]</scope>
    <source>
        <strain>cv. Rr-lamarckiana Sweden</strain>
    </source>
</reference>
<protein>
    <recommendedName>
        <fullName evidence="1">ATP synthase subunit b, chloroplastic</fullName>
    </recommendedName>
    <alternativeName>
        <fullName evidence="1">ATP synthase F(0) sector subunit b</fullName>
    </alternativeName>
    <alternativeName>
        <fullName evidence="1">ATPase subunit I</fullName>
    </alternativeName>
</protein>
<name>ATPF_OENGL</name>
<dbReference type="EMBL" id="EU262890">
    <property type="protein sequence ID" value="ABX10042.1"/>
    <property type="molecule type" value="Genomic_DNA"/>
</dbReference>
<dbReference type="RefSeq" id="YP_001687288.1">
    <property type="nucleotide sequence ID" value="NC_010360.2"/>
</dbReference>
<dbReference type="SMR" id="B0Z549"/>
<dbReference type="GeneID" id="5955297"/>
<dbReference type="GO" id="GO:0009535">
    <property type="term" value="C:chloroplast thylakoid membrane"/>
    <property type="evidence" value="ECO:0007669"/>
    <property type="project" value="UniProtKB-SubCell"/>
</dbReference>
<dbReference type="GO" id="GO:0045259">
    <property type="term" value="C:proton-transporting ATP synthase complex"/>
    <property type="evidence" value="ECO:0007669"/>
    <property type="project" value="UniProtKB-KW"/>
</dbReference>
<dbReference type="GO" id="GO:0046933">
    <property type="term" value="F:proton-transporting ATP synthase activity, rotational mechanism"/>
    <property type="evidence" value="ECO:0007669"/>
    <property type="project" value="UniProtKB-UniRule"/>
</dbReference>
<dbReference type="CDD" id="cd06503">
    <property type="entry name" value="ATP-synt_Fo_b"/>
    <property type="match status" value="1"/>
</dbReference>
<dbReference type="HAMAP" id="MF_01398">
    <property type="entry name" value="ATP_synth_b_bprime"/>
    <property type="match status" value="1"/>
</dbReference>
<dbReference type="InterPro" id="IPR002146">
    <property type="entry name" value="ATP_synth_b/b'su_bac/chlpt"/>
</dbReference>
<dbReference type="PANTHER" id="PTHR34264">
    <property type="entry name" value="ATP SYNTHASE SUBUNIT B, CHLOROPLASTIC"/>
    <property type="match status" value="1"/>
</dbReference>
<dbReference type="PANTHER" id="PTHR34264:SF3">
    <property type="entry name" value="ATP SYNTHASE SUBUNIT B, CHLOROPLASTIC"/>
    <property type="match status" value="1"/>
</dbReference>
<dbReference type="Pfam" id="PF00430">
    <property type="entry name" value="ATP-synt_B"/>
    <property type="match status" value="1"/>
</dbReference>